<evidence type="ECO:0000250" key="1">
    <source>
        <dbReference type="UniProtKB" id="Q5EHP3"/>
    </source>
</evidence>
<evidence type="ECO:0000269" key="2">
    <source>
    </source>
</evidence>
<evidence type="ECO:0000269" key="3">
    <source>
    </source>
</evidence>
<evidence type="ECO:0000303" key="4">
    <source>
    </source>
</evidence>
<evidence type="ECO:0000303" key="5">
    <source>
    </source>
</evidence>
<evidence type="ECO:0000305" key="6"/>
<evidence type="ECO:0000305" key="7">
    <source>
    </source>
</evidence>
<keyword id="KW-0027">Amidation</keyword>
<keyword id="KW-0903">Direct protein sequencing</keyword>
<keyword id="KW-1015">Disulfide bond</keyword>
<keyword id="KW-0379">Hydroxylation</keyword>
<keyword id="KW-0964">Secreted</keyword>
<keyword id="KW-0800">Toxin</keyword>
<proteinExistence type="evidence at protein level"/>
<accession>P85017</accession>
<accession>P0DPJ4</accession>
<protein>
    <recommendedName>
        <fullName evidence="4">Conotoxin Reg12e</fullName>
    </recommendedName>
    <alternativeName>
        <fullName evidence="5">Conotoxin reg3e</fullName>
    </alternativeName>
</protein>
<sequence length="16" mass="1728">KCCMRPICTCPCCIGP</sequence>
<reference key="1">
    <citation type="journal article" date="2006" name="Prog. Mol. Subcell. Biol.">
        <title>Hyperhydroxylation: a new strategy for neuronal targeting by venomous marine molluscs.</title>
        <authorList>
            <person name="Franco A."/>
            <person name="Pisarewicz K."/>
            <person name="Moller C."/>
            <person name="Mora D."/>
            <person name="Fields G.B."/>
            <person name="Mari F."/>
        </authorList>
    </citation>
    <scope>PROTEIN SEQUENCE</scope>
    <scope>SUBCELLULAR LOCATION</scope>
    <scope>AMIDATION AT PRO-16</scope>
    <scope>HYDROXYLATION AT PRO-11</scope>
    <source>
        <tissue>Venom</tissue>
    </source>
</reference>
<reference key="2">
    <citation type="journal article" date="2017" name="FEBS J.">
        <title>Structural plasticity of Mini-M conotoxins: expression of all mini-M subtypes by Conus regius.</title>
        <authorList>
            <person name="Franco A."/>
            <person name="Dovell S."/>
            <person name="Moller C."/>
            <person name="Grandal M."/>
            <person name="Clark E."/>
            <person name="Mari F."/>
        </authorList>
    </citation>
    <scope>PROTEIN SEQUENCE</scope>
    <scope>MASS SPECTROMETRY</scope>
    <scope>SUBCELLULAR LOCATION</scope>
    <scope>HYDROXYLATION AT PRO-11</scope>
    <source>
        <tissue>Venom</tissue>
    </source>
</reference>
<organism>
    <name type="scientific">Conus regius</name>
    <name type="common">Crown cone</name>
    <dbReference type="NCBI Taxonomy" id="101314"/>
    <lineage>
        <taxon>Eukaryota</taxon>
        <taxon>Metazoa</taxon>
        <taxon>Spiralia</taxon>
        <taxon>Lophotrochozoa</taxon>
        <taxon>Mollusca</taxon>
        <taxon>Gastropoda</taxon>
        <taxon>Caenogastropoda</taxon>
        <taxon>Neogastropoda</taxon>
        <taxon>Conoidea</taxon>
        <taxon>Conidae</taxon>
        <taxon>Conus</taxon>
        <taxon>Stephanoconus</taxon>
    </lineage>
</organism>
<feature type="peptide" id="PRO_0000259391" description="Conotoxin Reg12e" evidence="2">
    <location>
        <begin position="1"/>
        <end position="16"/>
    </location>
</feature>
<feature type="modified residue" description="4-hydroxyproline" evidence="2 3">
    <location>
        <position position="11"/>
    </location>
</feature>
<feature type="modified residue" description="Proline amide" evidence="2">
    <location>
        <position position="16"/>
    </location>
</feature>
<feature type="disulfide bond" evidence="1">
    <location>
        <begin position="2"/>
        <end position="13"/>
    </location>
</feature>
<feature type="disulfide bond" evidence="1">
    <location>
        <begin position="3"/>
        <end position="10"/>
    </location>
</feature>
<feature type="disulfide bond" evidence="1">
    <location>
        <begin position="8"/>
        <end position="12"/>
    </location>
</feature>
<dbReference type="ConoServer" id="1493">
    <property type="toxin name" value="Reg12e"/>
</dbReference>
<dbReference type="GO" id="GO:0005576">
    <property type="term" value="C:extracellular region"/>
    <property type="evidence" value="ECO:0007669"/>
    <property type="project" value="UniProtKB-SubCell"/>
</dbReference>
<dbReference type="GO" id="GO:0090729">
    <property type="term" value="F:toxin activity"/>
    <property type="evidence" value="ECO:0007669"/>
    <property type="project" value="UniProtKB-KW"/>
</dbReference>
<name>CMCE_CONRE</name>
<comment type="subcellular location">
    <subcellularLocation>
        <location evidence="2">Secreted</location>
    </subcellularLocation>
</comment>
<comment type="tissue specificity">
    <text evidence="7">Expressed by the venom duct.</text>
</comment>
<comment type="domain">
    <text evidence="6">The cysteine framework is III (CC-C-C-CC). Classified in the M-1 branch, since 1 residue stands between the fourth and the fifth cysteine residues.</text>
</comment>
<comment type="PTM">
    <text evidence="6">Reg12e and reg3e are conotoxins with identical sequences, but different post-translational modifications. Reg12e is C-terminally amidated, while reg3e is not.</text>
</comment>
<comment type="mass spectrometry" mass="1738.0" method="MALDI" evidence="3"/>
<comment type="similarity">
    <text evidence="6">Belongs to the conotoxin M superfamily.</text>
</comment>